<proteinExistence type="inferred from homology"/>
<gene>
    <name evidence="1" type="primary">lysS</name>
    <name type="ordered locus">Ava_3150</name>
</gene>
<protein>
    <recommendedName>
        <fullName evidence="1">Lysine--tRNA ligase</fullName>
        <ecNumber evidence="1">6.1.1.6</ecNumber>
    </recommendedName>
    <alternativeName>
        <fullName evidence="1">Lysyl-tRNA synthetase</fullName>
        <shortName evidence="1">LysRS</shortName>
    </alternativeName>
</protein>
<reference key="1">
    <citation type="journal article" date="2014" name="Stand. Genomic Sci.">
        <title>Complete genome sequence of Anabaena variabilis ATCC 29413.</title>
        <authorList>
            <person name="Thiel T."/>
            <person name="Pratte B.S."/>
            <person name="Zhong J."/>
            <person name="Goodwin L."/>
            <person name="Copeland A."/>
            <person name="Lucas S."/>
            <person name="Han C."/>
            <person name="Pitluck S."/>
            <person name="Land M.L."/>
            <person name="Kyrpides N.C."/>
            <person name="Woyke T."/>
        </authorList>
    </citation>
    <scope>NUCLEOTIDE SEQUENCE [LARGE SCALE GENOMIC DNA]</scope>
    <source>
        <strain>ATCC 29413 / PCC 7937</strain>
    </source>
</reference>
<accession>Q3M8C8</accession>
<organism>
    <name type="scientific">Trichormus variabilis (strain ATCC 29413 / PCC 7937)</name>
    <name type="common">Anabaena variabilis</name>
    <dbReference type="NCBI Taxonomy" id="240292"/>
    <lineage>
        <taxon>Bacteria</taxon>
        <taxon>Bacillati</taxon>
        <taxon>Cyanobacteriota</taxon>
        <taxon>Cyanophyceae</taxon>
        <taxon>Nostocales</taxon>
        <taxon>Nostocaceae</taxon>
        <taxon>Trichormus</taxon>
    </lineage>
</organism>
<name>SYK_TRIV2</name>
<evidence type="ECO:0000255" key="1">
    <source>
        <dbReference type="HAMAP-Rule" id="MF_00252"/>
    </source>
</evidence>
<keyword id="KW-0030">Aminoacyl-tRNA synthetase</keyword>
<keyword id="KW-0067">ATP-binding</keyword>
<keyword id="KW-0963">Cytoplasm</keyword>
<keyword id="KW-0436">Ligase</keyword>
<keyword id="KW-0460">Magnesium</keyword>
<keyword id="KW-0479">Metal-binding</keyword>
<keyword id="KW-0547">Nucleotide-binding</keyword>
<keyword id="KW-0648">Protein biosynthesis</keyword>
<dbReference type="EC" id="6.1.1.6" evidence="1"/>
<dbReference type="EMBL" id="CP000117">
    <property type="protein sequence ID" value="ABA22758.1"/>
    <property type="molecule type" value="Genomic_DNA"/>
</dbReference>
<dbReference type="SMR" id="Q3M8C8"/>
<dbReference type="STRING" id="240292.Ava_3150"/>
<dbReference type="KEGG" id="ava:Ava_3150"/>
<dbReference type="eggNOG" id="COG1190">
    <property type="taxonomic scope" value="Bacteria"/>
</dbReference>
<dbReference type="HOGENOM" id="CLU_008255_6_0_3"/>
<dbReference type="Proteomes" id="UP000002533">
    <property type="component" value="Chromosome"/>
</dbReference>
<dbReference type="GO" id="GO:0005829">
    <property type="term" value="C:cytosol"/>
    <property type="evidence" value="ECO:0007669"/>
    <property type="project" value="TreeGrafter"/>
</dbReference>
<dbReference type="GO" id="GO:0005524">
    <property type="term" value="F:ATP binding"/>
    <property type="evidence" value="ECO:0007669"/>
    <property type="project" value="UniProtKB-UniRule"/>
</dbReference>
<dbReference type="GO" id="GO:0004824">
    <property type="term" value="F:lysine-tRNA ligase activity"/>
    <property type="evidence" value="ECO:0007669"/>
    <property type="project" value="UniProtKB-UniRule"/>
</dbReference>
<dbReference type="GO" id="GO:0000287">
    <property type="term" value="F:magnesium ion binding"/>
    <property type="evidence" value="ECO:0007669"/>
    <property type="project" value="UniProtKB-UniRule"/>
</dbReference>
<dbReference type="GO" id="GO:0000049">
    <property type="term" value="F:tRNA binding"/>
    <property type="evidence" value="ECO:0007669"/>
    <property type="project" value="TreeGrafter"/>
</dbReference>
<dbReference type="GO" id="GO:0006430">
    <property type="term" value="P:lysyl-tRNA aminoacylation"/>
    <property type="evidence" value="ECO:0007669"/>
    <property type="project" value="UniProtKB-UniRule"/>
</dbReference>
<dbReference type="CDD" id="cd00775">
    <property type="entry name" value="LysRS_core"/>
    <property type="match status" value="1"/>
</dbReference>
<dbReference type="CDD" id="cd04322">
    <property type="entry name" value="LysRS_N"/>
    <property type="match status" value="1"/>
</dbReference>
<dbReference type="FunFam" id="2.40.50.140:FF:000024">
    <property type="entry name" value="Lysine--tRNA ligase"/>
    <property type="match status" value="1"/>
</dbReference>
<dbReference type="FunFam" id="3.30.930.10:FF:000067">
    <property type="entry name" value="Lysine--tRNA ligase"/>
    <property type="match status" value="1"/>
</dbReference>
<dbReference type="Gene3D" id="3.30.930.10">
    <property type="entry name" value="Bira Bifunctional Protein, Domain 2"/>
    <property type="match status" value="1"/>
</dbReference>
<dbReference type="Gene3D" id="2.40.50.140">
    <property type="entry name" value="Nucleic acid-binding proteins"/>
    <property type="match status" value="1"/>
</dbReference>
<dbReference type="HAMAP" id="MF_00252">
    <property type="entry name" value="Lys_tRNA_synth_class2"/>
    <property type="match status" value="1"/>
</dbReference>
<dbReference type="InterPro" id="IPR004364">
    <property type="entry name" value="Aa-tRNA-synt_II"/>
</dbReference>
<dbReference type="InterPro" id="IPR006195">
    <property type="entry name" value="aa-tRNA-synth_II"/>
</dbReference>
<dbReference type="InterPro" id="IPR045864">
    <property type="entry name" value="aa-tRNA-synth_II/BPL/LPL"/>
</dbReference>
<dbReference type="InterPro" id="IPR025309">
    <property type="entry name" value="KTSC_dom"/>
</dbReference>
<dbReference type="InterPro" id="IPR002313">
    <property type="entry name" value="Lys-tRNA-ligase_II"/>
</dbReference>
<dbReference type="InterPro" id="IPR034762">
    <property type="entry name" value="Lys-tRNA-ligase_II_bac/euk"/>
</dbReference>
<dbReference type="InterPro" id="IPR044136">
    <property type="entry name" value="Lys-tRNA-ligase_II_N"/>
</dbReference>
<dbReference type="InterPro" id="IPR018149">
    <property type="entry name" value="Lys-tRNA-synth_II_C"/>
</dbReference>
<dbReference type="InterPro" id="IPR012340">
    <property type="entry name" value="NA-bd_OB-fold"/>
</dbReference>
<dbReference type="InterPro" id="IPR004365">
    <property type="entry name" value="NA-bd_OB_tRNA"/>
</dbReference>
<dbReference type="NCBIfam" id="TIGR00499">
    <property type="entry name" value="lysS_bact"/>
    <property type="match status" value="1"/>
</dbReference>
<dbReference type="NCBIfam" id="NF001756">
    <property type="entry name" value="PRK00484.1"/>
    <property type="match status" value="1"/>
</dbReference>
<dbReference type="PANTHER" id="PTHR42918:SF15">
    <property type="entry name" value="LYSINE--TRNA LIGASE, CHLOROPLASTIC_MITOCHONDRIAL"/>
    <property type="match status" value="1"/>
</dbReference>
<dbReference type="PANTHER" id="PTHR42918">
    <property type="entry name" value="LYSYL-TRNA SYNTHETASE"/>
    <property type="match status" value="1"/>
</dbReference>
<dbReference type="Pfam" id="PF13619">
    <property type="entry name" value="KTSC"/>
    <property type="match status" value="1"/>
</dbReference>
<dbReference type="Pfam" id="PF00152">
    <property type="entry name" value="tRNA-synt_2"/>
    <property type="match status" value="1"/>
</dbReference>
<dbReference type="Pfam" id="PF01336">
    <property type="entry name" value="tRNA_anti-codon"/>
    <property type="match status" value="1"/>
</dbReference>
<dbReference type="PIRSF" id="PIRSF039101">
    <property type="entry name" value="LysRS2"/>
    <property type="match status" value="1"/>
</dbReference>
<dbReference type="PRINTS" id="PR00982">
    <property type="entry name" value="TRNASYNTHLYS"/>
</dbReference>
<dbReference type="SUPFAM" id="SSF55681">
    <property type="entry name" value="Class II aaRS and biotin synthetases"/>
    <property type="match status" value="1"/>
</dbReference>
<dbReference type="SUPFAM" id="SSF50249">
    <property type="entry name" value="Nucleic acid-binding proteins"/>
    <property type="match status" value="1"/>
</dbReference>
<dbReference type="PROSITE" id="PS50862">
    <property type="entry name" value="AA_TRNA_LIGASE_II"/>
    <property type="match status" value="1"/>
</dbReference>
<feature type="chain" id="PRO_1000012838" description="Lysine--tRNA ligase">
    <location>
        <begin position="1"/>
        <end position="561"/>
    </location>
</feature>
<feature type="binding site" evidence="1">
    <location>
        <position position="409"/>
    </location>
    <ligand>
        <name>Mg(2+)</name>
        <dbReference type="ChEBI" id="CHEBI:18420"/>
        <label>1</label>
    </ligand>
</feature>
<feature type="binding site" evidence="1">
    <location>
        <position position="416"/>
    </location>
    <ligand>
        <name>Mg(2+)</name>
        <dbReference type="ChEBI" id="CHEBI:18420"/>
        <label>1</label>
    </ligand>
</feature>
<feature type="binding site" evidence="1">
    <location>
        <position position="416"/>
    </location>
    <ligand>
        <name>Mg(2+)</name>
        <dbReference type="ChEBI" id="CHEBI:18420"/>
        <label>2</label>
    </ligand>
</feature>
<sequence>MSEEDIRAARLEKVEQLKQLGTNPYAYRWESTHHAAQLQEKFADLTSGEEVDTEVAIAGRIMARRVFGKLAFFTLEDETGTIQLYLEKNRIQESMAETDADAFNHLKQLTDVGDILGAKGTIKRTEKGELSIYVKEYTILTKSLLPLPDKWHGLTDVAKRYRQRYVDLIVNPEVRQTFRRRAQITAGIRRYLEQRDFLEIETPVLQSETGGADARPFITYHNTLEMELYLRIATELHLKRLIVGGFEKVFELGRVFRNEGISTRHNPEFTSIEIYQAYADYNDMMALTEGIITTVAQDVLGTLQITYQGETVDLTPPWRRVTMHDLVKEYTGLDFHSFQTLEEAKSASKNAGIPGVDEAQTIGKILNLAFEEKVEANLIQPTFVIDYPVEISPLAKPHRSQPGLVERFELFIVGRETANSFSELTDPIDQRERLEAQAAKKAAGDLEAQGVDEDFLTALEYGMPPTGGLGIGIDRLVMLLTDSASIRDVIAFPLLKPEGSFIKEYRYESTTQTLTMEFDSGSVYEYFKVPLTVKEELDNAPSKGQYFHKFIKGKFKYEQLS</sequence>
<comment type="catalytic activity">
    <reaction evidence="1">
        <text>tRNA(Lys) + L-lysine + ATP = L-lysyl-tRNA(Lys) + AMP + diphosphate</text>
        <dbReference type="Rhea" id="RHEA:20792"/>
        <dbReference type="Rhea" id="RHEA-COMP:9696"/>
        <dbReference type="Rhea" id="RHEA-COMP:9697"/>
        <dbReference type="ChEBI" id="CHEBI:30616"/>
        <dbReference type="ChEBI" id="CHEBI:32551"/>
        <dbReference type="ChEBI" id="CHEBI:33019"/>
        <dbReference type="ChEBI" id="CHEBI:78442"/>
        <dbReference type="ChEBI" id="CHEBI:78529"/>
        <dbReference type="ChEBI" id="CHEBI:456215"/>
        <dbReference type="EC" id="6.1.1.6"/>
    </reaction>
</comment>
<comment type="cofactor">
    <cofactor evidence="1">
        <name>Mg(2+)</name>
        <dbReference type="ChEBI" id="CHEBI:18420"/>
    </cofactor>
    <text evidence="1">Binds 3 Mg(2+) ions per subunit.</text>
</comment>
<comment type="subunit">
    <text evidence="1">Homodimer.</text>
</comment>
<comment type="subcellular location">
    <subcellularLocation>
        <location evidence="1">Cytoplasm</location>
    </subcellularLocation>
</comment>
<comment type="similarity">
    <text evidence="1">Belongs to the class-II aminoacyl-tRNA synthetase family.</text>
</comment>